<organism>
    <name type="scientific">Lemur catta</name>
    <name type="common">Ring-tailed lemur</name>
    <dbReference type="NCBI Taxonomy" id="9447"/>
    <lineage>
        <taxon>Eukaryota</taxon>
        <taxon>Metazoa</taxon>
        <taxon>Chordata</taxon>
        <taxon>Craniata</taxon>
        <taxon>Vertebrata</taxon>
        <taxon>Euteleostomi</taxon>
        <taxon>Mammalia</taxon>
        <taxon>Eutheria</taxon>
        <taxon>Euarchontoglires</taxon>
        <taxon>Primates</taxon>
        <taxon>Strepsirrhini</taxon>
        <taxon>Lemuriformes</taxon>
        <taxon>Lemuridae</taxon>
        <taxon>Lemur</taxon>
    </lineage>
</organism>
<keyword id="KW-0472">Membrane</keyword>
<keyword id="KW-0496">Mitochondrion</keyword>
<keyword id="KW-0999">Mitochondrion inner membrane</keyword>
<keyword id="KW-1278">Translocase</keyword>
<keyword id="KW-0812">Transmembrane</keyword>
<keyword id="KW-1133">Transmembrane helix</keyword>
<accession>Q8LX26</accession>
<proteinExistence type="inferred from homology"/>
<comment type="function">
    <text evidence="2">Component of the cytochrome c oxidase, the last enzyme in the mitochondrial electron transport chain which drives oxidative phosphorylation. The respiratory chain contains 3 multisubunit complexes succinate dehydrogenase (complex II, CII), ubiquinol-cytochrome c oxidoreductase (cytochrome b-c1 complex, complex III, CIII) and cytochrome c oxidase (complex IV, CIV), that cooperate to transfer electrons derived from NADH and succinate to molecular oxygen, creating an electrochemical gradient over the inner membrane that drives transmembrane transport and the ATP synthase. Cytochrome c oxidase is the component of the respiratory chain that catalyzes the reduction of oxygen to water. Electrons originating from reduced cytochrome c in the intermembrane space (IMS) are transferred via the dinuclear copper A center (CU(A)) of subunit 2 and heme A of subunit 1 to the active site in subunit 1, a binuclear center (BNC) formed by heme A3 and copper B (CU(B)). The BNC reduces molecular oxygen to 2 water molecules using 4 electrons from cytochrome c in the IMS and 4 protons from the mitochondrial matrix.</text>
</comment>
<comment type="catalytic activity">
    <reaction evidence="2">
        <text>4 Fe(II)-[cytochrome c] + O2 + 8 H(+)(in) = 4 Fe(III)-[cytochrome c] + 2 H2O + 4 H(+)(out)</text>
        <dbReference type="Rhea" id="RHEA:11436"/>
        <dbReference type="Rhea" id="RHEA-COMP:10350"/>
        <dbReference type="Rhea" id="RHEA-COMP:14399"/>
        <dbReference type="ChEBI" id="CHEBI:15377"/>
        <dbReference type="ChEBI" id="CHEBI:15378"/>
        <dbReference type="ChEBI" id="CHEBI:15379"/>
        <dbReference type="ChEBI" id="CHEBI:29033"/>
        <dbReference type="ChEBI" id="CHEBI:29034"/>
        <dbReference type="EC" id="7.1.1.9"/>
    </reaction>
    <physiologicalReaction direction="left-to-right" evidence="2">
        <dbReference type="Rhea" id="RHEA:11437"/>
    </physiologicalReaction>
</comment>
<comment type="subunit">
    <text evidence="1">Component of the cytochrome c oxidase (complex IV, CIV), a multisubunit enzyme composed of 14 subunits. The complex is composed of a catalytic core of 3 subunits MT-CO1, MT-CO2 and MT-CO3, encoded in the mitochondrial DNA, and 11 supernumerary subunits COX4I, COX5A, COX5B, COX6A, COX6B, COX6C, COX7A, COX7B, COX7C, COX8 and NDUFA4, which are encoded in the nuclear genome. The complex exists as a monomer or a dimer and forms supercomplexes (SCs) in the inner mitochondrial membrane with NADH-ubiquinone oxidoreductase (complex I, CI) and ubiquinol-cytochrome c oxidoreductase (cytochrome b-c1 complex, complex III, CIII), resulting in different assemblies (supercomplex SCI(1)III(2)IV(1) and megacomplex MCI(2)III(2)IV(2)).</text>
</comment>
<comment type="subcellular location">
    <subcellularLocation>
        <location evidence="1">Mitochondrion inner membrane</location>
        <topology evidence="1">Multi-pass membrane protein</topology>
    </subcellularLocation>
</comment>
<comment type="similarity">
    <text evidence="3">Belongs to the cytochrome c oxidase subunit 3 family.</text>
</comment>
<reference key="1">
    <citation type="journal article" date="2002" name="Proc. Natl. Acad. Sci. U.S.A.">
        <title>Mammalian mitogenomic relationships and the root of the eutherian tree.</title>
        <authorList>
            <person name="Arnason U."/>
            <person name="Adegoke J.A."/>
            <person name="Bodin K."/>
            <person name="Born E.W."/>
            <person name="Esa Y.B."/>
            <person name="Gullberg A."/>
            <person name="Nilsson M."/>
            <person name="Short R.V."/>
            <person name="Xu X."/>
            <person name="Janke A."/>
        </authorList>
    </citation>
    <scope>NUCLEOTIDE SEQUENCE [GENOMIC DNA]</scope>
</reference>
<geneLocation type="mitochondrion"/>
<feature type="chain" id="PRO_0000183798" description="Cytochrome c oxidase subunit 3">
    <location>
        <begin position="1"/>
        <end position="274"/>
    </location>
</feature>
<feature type="topological domain" description="Mitochondrial matrix" evidence="1">
    <location>
        <begin position="1"/>
        <end position="15"/>
    </location>
</feature>
<feature type="transmembrane region" description="Helical; Name=I" evidence="1">
    <location>
        <begin position="16"/>
        <end position="34"/>
    </location>
</feature>
<feature type="topological domain" description="Mitochondrial intermembrane" evidence="1">
    <location>
        <begin position="35"/>
        <end position="40"/>
    </location>
</feature>
<feature type="transmembrane region" description="Helical; Name=II" evidence="1">
    <location>
        <begin position="41"/>
        <end position="66"/>
    </location>
</feature>
<feature type="topological domain" description="Mitochondrial matrix" evidence="1">
    <location>
        <begin position="67"/>
        <end position="72"/>
    </location>
</feature>
<feature type="transmembrane region" description="Helical; Name=III" evidence="1">
    <location>
        <begin position="73"/>
        <end position="105"/>
    </location>
</feature>
<feature type="topological domain" description="Mitochondrial intermembrane" evidence="1">
    <location>
        <begin position="106"/>
        <end position="128"/>
    </location>
</feature>
<feature type="transmembrane region" description="Helical; Name=IV" evidence="1">
    <location>
        <begin position="129"/>
        <end position="152"/>
    </location>
</feature>
<feature type="topological domain" description="Mitochondrial matrix" evidence="1">
    <location>
        <begin position="153"/>
        <end position="155"/>
    </location>
</feature>
<feature type="transmembrane region" description="Helical; Name=V" evidence="1">
    <location>
        <begin position="156"/>
        <end position="183"/>
    </location>
</feature>
<feature type="topological domain" description="Mitochondrial intermembrane" evidence="1">
    <location>
        <begin position="184"/>
        <end position="190"/>
    </location>
</feature>
<feature type="transmembrane region" description="Helical; Name=VI" evidence="1">
    <location>
        <begin position="191"/>
        <end position="223"/>
    </location>
</feature>
<feature type="topological domain" description="Mitochondrial matrix" evidence="1">
    <location>
        <begin position="224"/>
        <end position="232"/>
    </location>
</feature>
<feature type="transmembrane region" description="Helical; Name=VII" evidence="1">
    <location>
        <begin position="233"/>
        <end position="256"/>
    </location>
</feature>
<feature type="topological domain" description="Mitochondrial intermembrane" evidence="1">
    <location>
        <begin position="257"/>
        <end position="274"/>
    </location>
</feature>
<dbReference type="EC" id="7.1.1.9"/>
<dbReference type="EMBL" id="AJ421451">
    <property type="protein sequence ID" value="CAD13427.2"/>
    <property type="molecule type" value="Genomic_DNA"/>
</dbReference>
<dbReference type="RefSeq" id="NP_659294.3">
    <property type="nucleotide sequence ID" value="NC_004025.1"/>
</dbReference>
<dbReference type="SMR" id="Q8LX26"/>
<dbReference type="GO" id="GO:0005743">
    <property type="term" value="C:mitochondrial inner membrane"/>
    <property type="evidence" value="ECO:0007669"/>
    <property type="project" value="UniProtKB-SubCell"/>
</dbReference>
<dbReference type="GO" id="GO:0045277">
    <property type="term" value="C:respiratory chain complex IV"/>
    <property type="evidence" value="ECO:0000250"/>
    <property type="project" value="UniProtKB"/>
</dbReference>
<dbReference type="GO" id="GO:0004129">
    <property type="term" value="F:cytochrome-c oxidase activity"/>
    <property type="evidence" value="ECO:0007669"/>
    <property type="project" value="UniProtKB-EC"/>
</dbReference>
<dbReference type="GO" id="GO:0006123">
    <property type="term" value="P:mitochondrial electron transport, cytochrome c to oxygen"/>
    <property type="evidence" value="ECO:0007669"/>
    <property type="project" value="TreeGrafter"/>
</dbReference>
<dbReference type="GO" id="GO:0008535">
    <property type="term" value="P:respiratory chain complex IV assembly"/>
    <property type="evidence" value="ECO:0000250"/>
    <property type="project" value="UniProtKB"/>
</dbReference>
<dbReference type="CDD" id="cd01665">
    <property type="entry name" value="Cyt_c_Oxidase_III"/>
    <property type="match status" value="1"/>
</dbReference>
<dbReference type="FunFam" id="1.10.287.70:FF:000048">
    <property type="entry name" value="Cytochrome c oxidase subunit 3"/>
    <property type="match status" value="1"/>
</dbReference>
<dbReference type="FunFam" id="1.20.120.80:FF:000002">
    <property type="entry name" value="Cytochrome c oxidase subunit 3"/>
    <property type="match status" value="1"/>
</dbReference>
<dbReference type="Gene3D" id="1.10.287.70">
    <property type="match status" value="1"/>
</dbReference>
<dbReference type="Gene3D" id="1.20.120.80">
    <property type="entry name" value="Cytochrome c oxidase, subunit III, four-helix bundle"/>
    <property type="match status" value="1"/>
</dbReference>
<dbReference type="InterPro" id="IPR024791">
    <property type="entry name" value="Cyt_c/ubiquinol_Oxase_su3"/>
</dbReference>
<dbReference type="InterPro" id="IPR033945">
    <property type="entry name" value="Cyt_c_oxase_su3_dom"/>
</dbReference>
<dbReference type="InterPro" id="IPR000298">
    <property type="entry name" value="Cyt_c_oxidase-like_su3"/>
</dbReference>
<dbReference type="InterPro" id="IPR035973">
    <property type="entry name" value="Cyt_c_oxidase_su3-like_sf"/>
</dbReference>
<dbReference type="InterPro" id="IPR013833">
    <property type="entry name" value="Cyt_c_oxidase_su3_a-hlx"/>
</dbReference>
<dbReference type="PANTHER" id="PTHR11403:SF7">
    <property type="entry name" value="CYTOCHROME C OXIDASE SUBUNIT 3"/>
    <property type="match status" value="1"/>
</dbReference>
<dbReference type="PANTHER" id="PTHR11403">
    <property type="entry name" value="CYTOCHROME C OXIDASE SUBUNIT III"/>
    <property type="match status" value="1"/>
</dbReference>
<dbReference type="Pfam" id="PF00510">
    <property type="entry name" value="COX3"/>
    <property type="match status" value="1"/>
</dbReference>
<dbReference type="SUPFAM" id="SSF81452">
    <property type="entry name" value="Cytochrome c oxidase subunit III-like"/>
    <property type="match status" value="1"/>
</dbReference>
<dbReference type="PROSITE" id="PS50253">
    <property type="entry name" value="COX3"/>
    <property type="match status" value="1"/>
</dbReference>
<sequence>MTHQTHAYHMVNPSPWPLTGALSALLMTSGLAMWFHFNSSMLLSLGMLTNLLTMYQWWRDIVREGTFQGHHTSIVQKGLRYGMVLFIISEIFFFAGFFWAFYHSSLAPTPELGGCWPPTGIHPLNPLEVPLLNTAVLLASGVSITWAHHSLMEGNRVQMLQALLITITLGLYFTLLQASEYFETSFTISDGVYGSTFFMATGFHGLHVIIGSTFLTVCFFRQLSFHFTSNHHFGFEAAAWYWHFVDVVWLFLYVSIYWWGSYSFSIDPMQLTSN</sequence>
<evidence type="ECO:0000250" key="1">
    <source>
        <dbReference type="UniProtKB" id="P00415"/>
    </source>
</evidence>
<evidence type="ECO:0000250" key="2">
    <source>
        <dbReference type="UniProtKB" id="P00420"/>
    </source>
</evidence>
<evidence type="ECO:0000305" key="3"/>
<protein>
    <recommendedName>
        <fullName>Cytochrome c oxidase subunit 3</fullName>
        <ecNumber>7.1.1.9</ecNumber>
    </recommendedName>
    <alternativeName>
        <fullName>Cytochrome c oxidase polypeptide III</fullName>
    </alternativeName>
</protein>
<name>COX3_LEMCA</name>
<gene>
    <name type="primary">MT-CO3</name>
    <name type="synonym">COIII</name>
    <name type="synonym">COXIII</name>
    <name type="synonym">MTCO3</name>
</gene>